<reference evidence="7" key="1">
    <citation type="journal article" date="2012" name="J. Biol. Chem.">
        <title>Novel Cyclotides and Uncyclotides with Highly Shortened Precursors from Chassalia chartacea and Effects of Methionine Oxidation on Bioactivities.</title>
        <authorList>
            <person name="Nguyen G.K."/>
            <person name="Lim W.H."/>
            <person name="Nguyen P.Q."/>
            <person name="Tam J.P."/>
        </authorList>
    </citation>
    <scope>NUCLEOTIDE SEQUENCE [MRNA]</scope>
    <scope>PROTEIN SEQUENCE OF 43-71</scope>
    <scope>MASS SPECTROMETRY</scope>
    <scope>IDENTIFICATION BY MASS SPECTROMETRY</scope>
</reference>
<accession>I0B6F3</accession>
<sequence>MAKFATQLFLLTASVVMLEVQSSIVIMQDPDLGRKLIMNPANGASCGETCFTGICFTAGCSCNPWPTCTRNGLNPESI</sequence>
<name>CYC4_CHACT</name>
<feature type="signal peptide" evidence="1">
    <location>
        <begin position="1"/>
        <end position="23"/>
    </location>
</feature>
<feature type="propeptide" id="PRO_0000440224" description="Removed in mature form" evidence="6">
    <location>
        <begin position="24"/>
        <end position="42"/>
    </location>
</feature>
<feature type="peptide" id="PRO_0000440225" description="Chassatide C4" evidence="2 3">
    <location>
        <begin position="43"/>
        <end position="71"/>
    </location>
</feature>
<feature type="propeptide" id="PRO_0000440226" description="Removed in mature form" evidence="6">
    <location>
        <begin position="72"/>
        <end position="78"/>
    </location>
</feature>
<feature type="disulfide bond" evidence="2">
    <location>
        <begin position="46"/>
        <end position="60"/>
    </location>
</feature>
<feature type="disulfide bond" evidence="2">
    <location>
        <begin position="50"/>
        <end position="62"/>
    </location>
</feature>
<feature type="disulfide bond" evidence="2">
    <location>
        <begin position="55"/>
        <end position="68"/>
    </location>
</feature>
<feature type="cross-link" description="Cyclopeptide (Gly-Asn)" evidence="3">
    <location>
        <begin position="43"/>
        <end position="71"/>
    </location>
</feature>
<dbReference type="EMBL" id="JQ309963">
    <property type="protein sequence ID" value="AFH57353.1"/>
    <property type="molecule type" value="mRNA"/>
</dbReference>
<dbReference type="SMR" id="I0B6F3"/>
<dbReference type="GO" id="GO:0006952">
    <property type="term" value="P:defense response"/>
    <property type="evidence" value="ECO:0007669"/>
    <property type="project" value="UniProtKB-KW"/>
</dbReference>
<dbReference type="InterPro" id="IPR005535">
    <property type="entry name" value="Cyclotide"/>
</dbReference>
<dbReference type="InterPro" id="IPR036146">
    <property type="entry name" value="Cyclotide_sf"/>
</dbReference>
<dbReference type="Pfam" id="PF03784">
    <property type="entry name" value="Cyclotide"/>
    <property type="match status" value="1"/>
</dbReference>
<dbReference type="SUPFAM" id="SSF57038">
    <property type="entry name" value="Cyclotides"/>
    <property type="match status" value="1"/>
</dbReference>
<organism>
    <name type="scientific">Chassalia chartacea</name>
    <name type="common">Chassalia curviflora</name>
    <dbReference type="NCBI Taxonomy" id="510798"/>
    <lineage>
        <taxon>Eukaryota</taxon>
        <taxon>Viridiplantae</taxon>
        <taxon>Streptophyta</taxon>
        <taxon>Embryophyta</taxon>
        <taxon>Tracheophyta</taxon>
        <taxon>Spermatophyta</taxon>
        <taxon>Magnoliopsida</taxon>
        <taxon>eudicotyledons</taxon>
        <taxon>Gunneridae</taxon>
        <taxon>Pentapetalae</taxon>
        <taxon>asterids</taxon>
        <taxon>lamiids</taxon>
        <taxon>Gentianales</taxon>
        <taxon>Rubiaceae</taxon>
        <taxon>Rubioideae</taxon>
        <taxon>Palicoureeae</taxon>
        <taxon>Chassalia</taxon>
    </lineage>
</organism>
<comment type="function">
    <text evidence="1 2">Probably participates in a plant defense mechanism.</text>
</comment>
<comment type="domain">
    <text evidence="5">The presence of a 'disulfide through disulfide knot' structurally defines this protein as a knottin.</text>
</comment>
<comment type="PTM">
    <text evidence="2">This is a cyclic peptide.</text>
</comment>
<comment type="mass spectrometry"/>
<comment type="similarity">
    <text evidence="4">Belongs to the cyclotide family. Moebius subfamily.</text>
</comment>
<protein>
    <recommendedName>
        <fullName evidence="4">Chassatide C4</fullName>
    </recommendedName>
    <alternativeName>
        <fullName evidence="4">Cyclotide chaC4</fullName>
    </alternativeName>
</protein>
<evidence type="ECO:0000255" key="1"/>
<evidence type="ECO:0000255" key="2">
    <source>
        <dbReference type="PROSITE-ProRule" id="PRU00395"/>
    </source>
</evidence>
<evidence type="ECO:0000269" key="3">
    <source>
    </source>
</evidence>
<evidence type="ECO:0000303" key="4">
    <source>
    </source>
</evidence>
<evidence type="ECO:0000305" key="5"/>
<evidence type="ECO:0000305" key="6">
    <source>
    </source>
</evidence>
<evidence type="ECO:0000312" key="7">
    <source>
        <dbReference type="EMBL" id="AFH57353.1"/>
    </source>
</evidence>
<proteinExistence type="evidence at protein level"/>
<keyword id="KW-0903">Direct protein sequencing</keyword>
<keyword id="KW-1015">Disulfide bond</keyword>
<keyword id="KW-0960">Knottin</keyword>
<keyword id="KW-0611">Plant defense</keyword>
<keyword id="KW-0732">Signal</keyword>